<accession>Q60870</accession>
<evidence type="ECO:0000250" key="1">
    <source>
        <dbReference type="UniProtKB" id="Q00765"/>
    </source>
</evidence>
<evidence type="ECO:0000255" key="2"/>
<evidence type="ECO:0000269" key="3">
    <source>
    </source>
</evidence>
<evidence type="ECO:0000269" key="4">
    <source>
    </source>
</evidence>
<evidence type="ECO:0000269" key="5">
    <source>
    </source>
</evidence>
<evidence type="ECO:0000305" key="6"/>
<dbReference type="EMBL" id="U28168">
    <property type="protein sequence ID" value="AAB07994.1"/>
    <property type="molecule type" value="mRNA"/>
</dbReference>
<dbReference type="PIR" id="JC4667">
    <property type="entry name" value="JC4667"/>
</dbReference>
<dbReference type="SMR" id="Q60870"/>
<dbReference type="FunCoup" id="Q60870">
    <property type="interactions" value="1066"/>
</dbReference>
<dbReference type="IntAct" id="Q60870">
    <property type="interactions" value="2"/>
</dbReference>
<dbReference type="STRING" id="10090.ENSMUSP00000006027"/>
<dbReference type="GlyGen" id="Q60870">
    <property type="glycosylation" value="1 site, 1 O-linked glycan (1 site)"/>
</dbReference>
<dbReference type="iPTMnet" id="Q60870"/>
<dbReference type="PhosphoSitePlus" id="Q60870"/>
<dbReference type="SwissPalm" id="Q60870"/>
<dbReference type="jPOST" id="Q60870"/>
<dbReference type="PaxDb" id="10090-ENSMUSP00000006027"/>
<dbReference type="PeptideAtlas" id="Q60870"/>
<dbReference type="ProteomicsDB" id="253201"/>
<dbReference type="Pumba" id="Q60870"/>
<dbReference type="AGR" id="MGI:1270152"/>
<dbReference type="MGI" id="MGI:1270152">
    <property type="gene designation" value="Reep5"/>
</dbReference>
<dbReference type="eggNOG" id="KOG1725">
    <property type="taxonomic scope" value="Eukaryota"/>
</dbReference>
<dbReference type="InParanoid" id="Q60870"/>
<dbReference type="PhylomeDB" id="Q60870"/>
<dbReference type="CD-CODE" id="CE726F99">
    <property type="entry name" value="Postsynaptic density"/>
</dbReference>
<dbReference type="ChiTaRS" id="Reep5">
    <property type="organism name" value="mouse"/>
</dbReference>
<dbReference type="PRO" id="PR:Q60870"/>
<dbReference type="Proteomes" id="UP000000589">
    <property type="component" value="Unplaced"/>
</dbReference>
<dbReference type="RNAct" id="Q60870">
    <property type="molecule type" value="protein"/>
</dbReference>
<dbReference type="GO" id="GO:0005783">
    <property type="term" value="C:endoplasmic reticulum"/>
    <property type="evidence" value="ECO:0000314"/>
    <property type="project" value="MGI"/>
</dbReference>
<dbReference type="GO" id="GO:0071782">
    <property type="term" value="C:endoplasmic reticulum tubular network"/>
    <property type="evidence" value="ECO:0000314"/>
    <property type="project" value="UniProtKB"/>
</dbReference>
<dbReference type="GO" id="GO:0014701">
    <property type="term" value="C:junctional sarcoplasmic reticulum membrane"/>
    <property type="evidence" value="ECO:0000314"/>
    <property type="project" value="UniProtKB"/>
</dbReference>
<dbReference type="GO" id="GO:0033017">
    <property type="term" value="C:sarcoplasmic reticulum membrane"/>
    <property type="evidence" value="ECO:0000314"/>
    <property type="project" value="UniProtKB"/>
</dbReference>
<dbReference type="GO" id="GO:0090158">
    <property type="term" value="P:endoplasmic reticulum membrane organization"/>
    <property type="evidence" value="ECO:0000315"/>
    <property type="project" value="UniProtKB"/>
</dbReference>
<dbReference type="InterPro" id="IPR004345">
    <property type="entry name" value="TB2_DP1_HVA22"/>
</dbReference>
<dbReference type="PANTHER" id="PTHR12300">
    <property type="entry name" value="HVA22-LIKE PROTEINS"/>
    <property type="match status" value="1"/>
</dbReference>
<dbReference type="PANTHER" id="PTHR12300:SF93">
    <property type="entry name" value="RECEPTOR EXPRESSION-ENHANCING PROTEIN 5"/>
    <property type="match status" value="1"/>
</dbReference>
<dbReference type="Pfam" id="PF03134">
    <property type="entry name" value="TB2_DP1_HVA22"/>
    <property type="match status" value="1"/>
</dbReference>
<reference key="1">
    <citation type="journal article" date="1996" name="Gene">
        <title>The murine homolog of TB2/DP1, a gene of the familial adenomatous polyposis (FAP) locus.</title>
        <authorList>
            <person name="Prieschl E.E."/>
            <person name="Pendl G.G."/>
            <person name="Harrer N.E."/>
            <person name="Baumruker T."/>
        </authorList>
    </citation>
    <scope>NUCLEOTIDE SEQUENCE [MRNA]</scope>
</reference>
<reference key="2">
    <citation type="submission" date="2007-04" db="UniProtKB">
        <authorList>
            <person name="Lubec G."/>
            <person name="Kang S.U."/>
        </authorList>
    </citation>
    <scope>PROTEIN SEQUENCE OF 13-21 AND 144-153</scope>
    <scope>IDENTIFICATION BY MASS SPECTROMETRY</scope>
    <source>
        <strain>C57BL/6J</strain>
        <tissue>Brain</tissue>
    </source>
</reference>
<reference key="3">
    <citation type="journal article" date="2009" name="Cell">
        <title>A class of dynamin-like GTPases involved in the generation of the tubular ER network.</title>
        <authorList>
            <person name="Hu J."/>
            <person name="Shibata Y."/>
            <person name="Zhu P.-P."/>
            <person name="Voss C."/>
            <person name="Rismanchi N."/>
            <person name="Prinz W.A."/>
            <person name="Rapoport T.A."/>
            <person name="Blackstone C."/>
        </authorList>
    </citation>
    <scope>INTERACTION WITH ATL1 AND ATL2</scope>
</reference>
<reference key="4">
    <citation type="journal article" date="2010" name="Cell">
        <title>A tissue-specific atlas of mouse protein phosphorylation and expression.</title>
        <authorList>
            <person name="Huttlin E.L."/>
            <person name="Jedrychowski M.P."/>
            <person name="Elias J.E."/>
            <person name="Goswami T."/>
            <person name="Rad R."/>
            <person name="Beausoleil S.A."/>
            <person name="Villen J."/>
            <person name="Haas W."/>
            <person name="Sowa M.E."/>
            <person name="Gygi S.P."/>
        </authorList>
    </citation>
    <scope>IDENTIFICATION BY MASS SPECTROMETRY [LARGE SCALE ANALYSIS]</scope>
    <source>
        <tissue>Brain</tissue>
        <tissue>Brown adipose tissue</tissue>
        <tissue>Heart</tissue>
        <tissue>Liver</tissue>
        <tissue>Lung</tissue>
        <tissue>Pancreas</tissue>
        <tissue>Spleen</tissue>
        <tissue>Testis</tissue>
    </source>
</reference>
<reference key="5">
    <citation type="journal article" date="2014" name="J. Biol. Chem.">
        <title>Protrudin regulates endoplasmic reticulum morphology and function associated with the pathogenesis of hereditary spastic paraplegia.</title>
        <authorList>
            <person name="Hashimoto Y."/>
            <person name="Shirane M."/>
            <person name="Matsuzaki F."/>
            <person name="Saita S."/>
            <person name="Ohnishi T."/>
            <person name="Nakayama K.I."/>
        </authorList>
    </citation>
    <scope>SUBCELLULAR LOCATION</scope>
    <scope>INTERACTION WITH ZFYVE27</scope>
</reference>
<reference key="6">
    <citation type="journal article" date="2020" name="Nat. Commun.">
        <title>REEP5 depletion causes sarco-endoplasmic reticulum vacuolization and cardiac functional defects.</title>
        <authorList>
            <person name="Lee S.H."/>
            <person name="Hadipour-Lakmehsari S."/>
            <person name="Murthy H.R."/>
            <person name="Gibb N."/>
            <person name="Miyake T."/>
            <person name="Teng A.C.T."/>
            <person name="Cosme J."/>
            <person name="Yu J.C."/>
            <person name="Moon M."/>
            <person name="Lim S."/>
            <person name="Wong V."/>
            <person name="Liu P."/>
            <person name="Billia F."/>
            <person name="Fernandez-Gonzalez R."/>
            <person name="Stagljar I."/>
            <person name="Sharma P."/>
            <person name="Kislinger T."/>
            <person name="Scott I.C."/>
            <person name="Gramolini A.O."/>
        </authorList>
    </citation>
    <scope>FUNCTION</scope>
    <scope>SUBUNIT</scope>
    <scope>INTERACTION WITH ATL3; CKAP4 AND RTN4</scope>
    <scope>SUBCELLULAR LOCATION</scope>
    <scope>TISSUE SPECIFICITY</scope>
    <scope>DISRUPTION PHENOTYPE</scope>
</reference>
<keyword id="KW-0903">Direct protein sequencing</keyword>
<keyword id="KW-0256">Endoplasmic reticulum</keyword>
<keyword id="KW-0472">Membrane</keyword>
<keyword id="KW-1185">Reference proteome</keyword>
<keyword id="KW-0703">Sarcoplasmic reticulum</keyword>
<keyword id="KW-0812">Transmembrane</keyword>
<keyword id="KW-1133">Transmembrane helix</keyword>
<name>REEP5_MOUSE</name>
<gene>
    <name type="primary">Reep5</name>
    <name type="synonym">Dp1</name>
</gene>
<proteinExistence type="evidence at protein level"/>
<comment type="function">
    <text evidence="5">Plays an essential role in heart function and development by regulating the organization and function of the sarcoplasmic reticulum in cardiomyocytes.</text>
</comment>
<comment type="subunit">
    <text evidence="3 4 5">Monomer (heart including ventricles) (PubMed:32075961). Homodimer (atria, kidney, intestine); maybe disulfide-linked (PubMed:32075961). Homotrimer (heart, ventricle, skeletal muscle, liver) (PubMed:32075961). Interacts with ATL1 (PubMed:19665976). Interacts with ATL2 (PubMed:19665976). Interacts with ATL3 (PubMed:32075961). Interacts with CKAP4 (PubMed:32075961). Interacts with RTN4 (isoforms A and B) (PubMed:32075961). Interacts with ZFYVE27 (PubMed:24668814).</text>
</comment>
<comment type="interaction">
    <interactant intactId="EBI-2410304">
        <id>Q60870</id>
    </interactant>
    <interactant intactId="EBI-2410266">
        <id>Q8WXF7</id>
        <label>ATL1</label>
    </interactant>
    <organismsDiffer>true</organismsDiffer>
    <experiments>2</experiments>
</comment>
<comment type="interaction">
    <interactant intactId="EBI-2410304">
        <id>Q60870</id>
    </interactant>
    <interactant intactId="EBI-2410430">
        <id>Q8NHH9</id>
        <label>ATL2</label>
    </interactant>
    <organismsDiffer>true</organismsDiffer>
    <experiments>2</experiments>
</comment>
<comment type="subcellular location">
    <subcellularLocation>
        <location evidence="4">Endoplasmic reticulum membrane</location>
        <topology evidence="2">Multi-pass membrane protein</topology>
    </subcellularLocation>
    <subcellularLocation>
        <location evidence="5">Sarcoplasmic reticulum membrane</location>
        <topology evidence="2">Multi-pass membrane protein</topology>
    </subcellularLocation>
    <text evidence="4 5">Localizes to endoplasmic reticulum tubular network (PubMed:24668814). In cardiomyocytes, localizes to the junctional sarcoplasmic reticulum membrane which is closely tethered to the cell membrane and contractile machinery (PubMed:32075961).</text>
</comment>
<comment type="tissue specificity">
    <text evidence="5">Highly expressed in heart including ventricles (at protein level). Expressed in cardiomyocytes (at protein level) (PubMed:32075961). Also, expressed in skeletal muscle and kidney and to a lesser extend in brain, liver and intestine (at protein level) (PubMed:32075961).</text>
</comment>
<comment type="domain">
    <text evidence="1">The short lumenal loops between transmembrane domains 1 and 2 and between transmembrane domains 3 and 4 may impart a wedge-like configuration, thus deforming membranes.</text>
</comment>
<comment type="disruption phenotype">
    <text evidence="3">RNAi-mediated knockdown in the heart of P10 neonatal mice causes lethal cardiac dysfunction at 4 weeks (PubMed:19665976). Myocardium is disorganized with greater fibrotic regions with significant collagen deposition in the ventricular myocardium (PubMed:19665976). Mice show significant myocardial dilatation and cardiac contractile dysfunction (PubMed:19665976). Also, sarcomere organization is disordered and the sarcoplasmic reticulum membrane forms vacuoles (PubMed:19665976). Myocardium has elevated expression levels of ER stress marker Hspa5/Grp78, cleaved Casp12, Rtn4, Atl3 and Ckap4 (PubMed:19665976).</text>
</comment>
<comment type="similarity">
    <text evidence="6">Belongs to the DP1 family.</text>
</comment>
<organism>
    <name type="scientific">Mus musculus</name>
    <name type="common">Mouse</name>
    <dbReference type="NCBI Taxonomy" id="10090"/>
    <lineage>
        <taxon>Eukaryota</taxon>
        <taxon>Metazoa</taxon>
        <taxon>Chordata</taxon>
        <taxon>Craniata</taxon>
        <taxon>Vertebrata</taxon>
        <taxon>Euteleostomi</taxon>
        <taxon>Mammalia</taxon>
        <taxon>Eutheria</taxon>
        <taxon>Euarchontoglires</taxon>
        <taxon>Glires</taxon>
        <taxon>Rodentia</taxon>
        <taxon>Myomorpha</taxon>
        <taxon>Muroidea</taxon>
        <taxon>Muridae</taxon>
        <taxon>Murinae</taxon>
        <taxon>Mus</taxon>
        <taxon>Mus</taxon>
    </lineage>
</organism>
<protein>
    <recommendedName>
        <fullName>Receptor expression-enhancing protein 5</fullName>
    </recommendedName>
    <alternativeName>
        <fullName>GP106</fullName>
    </alternativeName>
    <alternativeName>
        <fullName>Polyposis locus protein 1 homolog</fullName>
    </alternativeName>
    <alternativeName>
        <fullName>Protein TB2 homolog</fullName>
    </alternativeName>
</protein>
<feature type="chain" id="PRO_0000101816" description="Receptor expression-enhancing protein 5">
    <location>
        <begin position="1"/>
        <end position="185"/>
    </location>
</feature>
<feature type="topological domain" description="Cytoplasmic" evidence="1">
    <location>
        <begin position="1"/>
        <end position="30"/>
    </location>
</feature>
<feature type="transmembrane region" description="Helical" evidence="1">
    <location>
        <begin position="31"/>
        <end position="47"/>
    </location>
</feature>
<feature type="topological domain" description="Lumenal" evidence="1">
    <location>
        <begin position="48"/>
        <end position="49"/>
    </location>
</feature>
<feature type="transmembrane region" description="Helical" evidence="1">
    <location>
        <begin position="50"/>
        <end position="70"/>
    </location>
</feature>
<feature type="topological domain" description="Cytoplasmic" evidence="1">
    <location>
        <begin position="71"/>
        <end position="80"/>
    </location>
</feature>
<feature type="transmembrane region" description="Helical" evidence="1">
    <location>
        <begin position="81"/>
        <end position="99"/>
    </location>
</feature>
<feature type="topological domain" description="Lumenal" evidence="1">
    <location>
        <begin position="100"/>
        <end position="101"/>
    </location>
</feature>
<feature type="transmembrane region" description="Helical" evidence="1">
    <location>
        <begin position="102"/>
        <end position="119"/>
    </location>
</feature>
<feature type="topological domain" description="Cytoplasmic" evidence="1">
    <location>
        <begin position="120"/>
        <end position="185"/>
    </location>
</feature>
<feature type="region of interest" description="Required for dimerization and maintaining endoplasmic reticulum morphology" evidence="1">
    <location>
        <begin position="110"/>
        <end position="181"/>
    </location>
</feature>
<sequence>MRERFDRFLHEKNCMTDLLAKLEAKTGVNRSFIALGVIGLVALYLVFGYGASLLCNLIGFGYPAYISMKAIESPNKDDDTQWLTYWVVYGVFSIAEFFSDLFLSWLPFYYMLKCGFLLWCMAPSPANGAEMLYRRIIRPIFLRHESQVDSVVKDVKDKAKETADAISKEVKKATVNLLGDVKKST</sequence>